<accession>Q00277</accession>
<gene>
    <name type="primary">GPX1</name>
</gene>
<keyword id="KW-0002">3D-structure</keyword>
<keyword id="KW-0560">Oxidoreductase</keyword>
<keyword id="KW-0575">Peroxidase</keyword>
<keyword id="KW-1185">Reference proteome</keyword>
<keyword id="KW-0712">Selenocysteine</keyword>
<organism>
    <name type="scientific">Schistosoma mansoni</name>
    <name type="common">Blood fluke</name>
    <dbReference type="NCBI Taxonomy" id="6183"/>
    <lineage>
        <taxon>Eukaryota</taxon>
        <taxon>Metazoa</taxon>
        <taxon>Spiralia</taxon>
        <taxon>Lophotrochozoa</taxon>
        <taxon>Platyhelminthes</taxon>
        <taxon>Trematoda</taxon>
        <taxon>Digenea</taxon>
        <taxon>Strigeidida</taxon>
        <taxon>Schistosomatoidea</taxon>
        <taxon>Schistosomatidae</taxon>
        <taxon>Schistosoma</taxon>
    </lineage>
</organism>
<protein>
    <recommendedName>
        <fullName>Glutathione peroxidase</fullName>
        <shortName>GPX</shortName>
        <ecNumber>1.11.1.9</ecNumber>
    </recommendedName>
</protein>
<dbReference type="EC" id="1.11.1.9"/>
<dbReference type="EMBL" id="M86510">
    <property type="protein sequence ID" value="AAA29885.2"/>
    <property type="molecule type" value="mRNA"/>
</dbReference>
<dbReference type="EMBL" id="L37762">
    <property type="protein sequence ID" value="AAC14468.2"/>
    <property type="molecule type" value="Genomic_DNA"/>
</dbReference>
<dbReference type="EMBL" id="L14328">
    <property type="protein sequence ID" value="AAB08485.2"/>
    <property type="molecule type" value="Genomic_DNA"/>
</dbReference>
<dbReference type="RefSeq" id="XP_018645850.1">
    <property type="nucleotide sequence ID" value="XM_018790830.1"/>
</dbReference>
<dbReference type="PDB" id="2V1M">
    <property type="method" value="X-ray"/>
    <property type="resolution" value="1.00 A"/>
    <property type="chains" value="A=1-169"/>
</dbReference>
<dbReference type="PDB" id="2WGR">
    <property type="method" value="X-ray"/>
    <property type="resolution" value="1.70 A"/>
    <property type="chains" value="A=1-169"/>
</dbReference>
<dbReference type="PDBsum" id="2V1M"/>
<dbReference type="PDBsum" id="2WGR"/>
<dbReference type="SMR" id="Q00277"/>
<dbReference type="FunCoup" id="Q00277">
    <property type="interactions" value="1337"/>
</dbReference>
<dbReference type="STRING" id="6183.Q00277"/>
<dbReference type="PeroxiBase" id="3745">
    <property type="entry name" value="SmamGPx01"/>
</dbReference>
<dbReference type="KEGG" id="smm:Smp_058690"/>
<dbReference type="CTD" id="8352588"/>
<dbReference type="eggNOG" id="KOG1651">
    <property type="taxonomic scope" value="Eukaryota"/>
</dbReference>
<dbReference type="HOGENOM" id="CLU_029507_0_1_1"/>
<dbReference type="InParanoid" id="Q00277"/>
<dbReference type="OMA" id="TFPMTEK"/>
<dbReference type="OrthoDB" id="446890at2759"/>
<dbReference type="BRENDA" id="1.11.1.9">
    <property type="organism ID" value="5608"/>
</dbReference>
<dbReference type="EvolutionaryTrace" id="Q00277"/>
<dbReference type="Proteomes" id="UP000008854">
    <property type="component" value="Unassembled WGS sequence"/>
</dbReference>
<dbReference type="GO" id="GO:0004602">
    <property type="term" value="F:glutathione peroxidase activity"/>
    <property type="evidence" value="ECO:0007669"/>
    <property type="project" value="UniProtKB-EC"/>
</dbReference>
<dbReference type="GO" id="GO:0006979">
    <property type="term" value="P:response to oxidative stress"/>
    <property type="evidence" value="ECO:0007669"/>
    <property type="project" value="InterPro"/>
</dbReference>
<dbReference type="CDD" id="cd00340">
    <property type="entry name" value="GSH_Peroxidase"/>
    <property type="match status" value="1"/>
</dbReference>
<dbReference type="FunFam" id="3.40.30.10:FF:000545">
    <property type="entry name" value="Glutathione peroxidase"/>
    <property type="match status" value="1"/>
</dbReference>
<dbReference type="Gene3D" id="3.40.30.10">
    <property type="entry name" value="Glutaredoxin"/>
    <property type="match status" value="1"/>
</dbReference>
<dbReference type="InterPro" id="IPR000889">
    <property type="entry name" value="Glutathione_peroxidase"/>
</dbReference>
<dbReference type="InterPro" id="IPR029759">
    <property type="entry name" value="GPX_AS"/>
</dbReference>
<dbReference type="InterPro" id="IPR029760">
    <property type="entry name" value="GPX_CS"/>
</dbReference>
<dbReference type="InterPro" id="IPR036249">
    <property type="entry name" value="Thioredoxin-like_sf"/>
</dbReference>
<dbReference type="PANTHER" id="PTHR11592">
    <property type="entry name" value="GLUTATHIONE PEROXIDASE"/>
    <property type="match status" value="1"/>
</dbReference>
<dbReference type="PANTHER" id="PTHR11592:SF134">
    <property type="entry name" value="PHOSPHOLIPID HYDROPEROXIDE GLUTATHIONE PEROXIDASE"/>
    <property type="match status" value="1"/>
</dbReference>
<dbReference type="Pfam" id="PF00255">
    <property type="entry name" value="GSHPx"/>
    <property type="match status" value="1"/>
</dbReference>
<dbReference type="PIRSF" id="PIRSF000303">
    <property type="entry name" value="Glutathion_perox"/>
    <property type="match status" value="1"/>
</dbReference>
<dbReference type="PRINTS" id="PR01011">
    <property type="entry name" value="GLUTPROXDASE"/>
</dbReference>
<dbReference type="SUPFAM" id="SSF52833">
    <property type="entry name" value="Thioredoxin-like"/>
    <property type="match status" value="1"/>
</dbReference>
<dbReference type="PROSITE" id="PS00460">
    <property type="entry name" value="GLUTATHIONE_PEROXID_1"/>
    <property type="match status" value="1"/>
</dbReference>
<dbReference type="PROSITE" id="PS00763">
    <property type="entry name" value="GLUTATHIONE_PEROXID_2"/>
    <property type="match status" value="1"/>
</dbReference>
<dbReference type="PROSITE" id="PS51355">
    <property type="entry name" value="GLUTATHIONE_PEROXID_3"/>
    <property type="match status" value="1"/>
</dbReference>
<comment type="catalytic activity">
    <reaction>
        <text>2 glutathione + H2O2 = glutathione disulfide + 2 H2O</text>
        <dbReference type="Rhea" id="RHEA:16833"/>
        <dbReference type="ChEBI" id="CHEBI:15377"/>
        <dbReference type="ChEBI" id="CHEBI:16240"/>
        <dbReference type="ChEBI" id="CHEBI:57925"/>
        <dbReference type="ChEBI" id="CHEBI:58297"/>
        <dbReference type="EC" id="1.11.1.9"/>
    </reaction>
</comment>
<comment type="induction">
    <text>Activity increases significantly as worms mature in their host and is positively correlated to the resistance to antioxidants.</text>
</comment>
<comment type="similarity">
    <text evidence="2">Belongs to the glutathione peroxidase family.</text>
</comment>
<evidence type="ECO:0000250" key="1"/>
<evidence type="ECO:0000305" key="2"/>
<evidence type="ECO:0007829" key="3">
    <source>
        <dbReference type="PDB" id="2V1M"/>
    </source>
</evidence>
<evidence type="ECO:0007829" key="4">
    <source>
        <dbReference type="PDB" id="2WGR"/>
    </source>
</evidence>
<proteinExistence type="evidence at protein level"/>
<reference key="1">
    <citation type="journal article" date="1992" name="Mol. Biochem. Parasitol.">
        <title>Molecular cloning and sequencing of glutathione peroxidase from Schistosoma mansoni.</title>
        <authorList>
            <person name="Williams D.L."/>
            <person name="Pierce R.J."/>
            <person name="Cookson E."/>
            <person name="Capron A."/>
        </authorList>
    </citation>
    <scope>NUCLEOTIDE SEQUENCE [MRNA]</scope>
    <source>
        <strain>Puerto Rican</strain>
    </source>
</reference>
<reference key="2">
    <citation type="submission" date="2001-07" db="EMBL/GenBank/DDBJ databases">
        <authorList>
            <person name="Williams D.L."/>
            <person name="Pierce R.J."/>
            <person name="Cookson E."/>
            <person name="Capron A."/>
        </authorList>
    </citation>
    <scope>SEQUENCE REVISION TO 43</scope>
</reference>
<reference key="3">
    <citation type="journal article" date="1995" name="Exp. Parasitol.">
        <title>Schistosoma mansoni: cloning the gene encoding glutathione peroxidase.</title>
        <authorList>
            <person name="Mei H."/>
            <person name="Loverde P.T."/>
        </authorList>
    </citation>
    <scope>NUCLEOTIDE SEQUENCE [GENOMIC DNA]</scope>
    <source>
        <strain>NMRI</strain>
    </source>
</reference>
<reference key="4">
    <citation type="journal article" date="1994" name="Gene">
        <title>Cloning and characterization of the gene encoding Schistosoma mansoni glutathione peroxidase.</title>
        <authorList>
            <person name="Roche C."/>
            <person name="Williams D.L."/>
            <person name="Khalife J."/>
            <person name="Lepresle T."/>
            <person name="Capron A."/>
            <person name="Pierce R.J."/>
        </authorList>
    </citation>
    <scope>NUCLEOTIDE SEQUENCE [GENOMIC DNA]</scope>
    <source>
        <strain>Puerto Rican</strain>
    </source>
</reference>
<feature type="chain" id="PRO_0000066645" description="Glutathione peroxidase">
    <location>
        <begin position="1"/>
        <end position="169"/>
    </location>
</feature>
<feature type="active site" evidence="1">
    <location>
        <position position="43"/>
    </location>
</feature>
<feature type="non-standard amino acid" description="Selenocysteine">
    <location>
        <position position="43"/>
    </location>
</feature>
<feature type="helix" evidence="3">
    <location>
        <begin position="11"/>
        <end position="13"/>
    </location>
</feature>
<feature type="strand" evidence="3">
    <location>
        <begin position="15"/>
        <end position="18"/>
    </location>
</feature>
<feature type="strand" evidence="3">
    <location>
        <begin position="23"/>
        <end position="25"/>
    </location>
</feature>
<feature type="helix" evidence="3">
    <location>
        <begin position="26"/>
        <end position="29"/>
    </location>
</feature>
<feature type="strand" evidence="3">
    <location>
        <begin position="32"/>
        <end position="39"/>
    </location>
</feature>
<feature type="strand" evidence="3">
    <location>
        <begin position="41"/>
        <end position="43"/>
    </location>
</feature>
<feature type="helix" evidence="3">
    <location>
        <begin position="46"/>
        <end position="60"/>
    </location>
</feature>
<feature type="helix" evidence="3">
    <location>
        <begin position="61"/>
        <end position="63"/>
    </location>
</feature>
<feature type="strand" evidence="3">
    <location>
        <begin position="65"/>
        <end position="71"/>
    </location>
</feature>
<feature type="turn" evidence="4">
    <location>
        <begin position="74"/>
        <end position="77"/>
    </location>
</feature>
<feature type="helix" evidence="3">
    <location>
        <begin position="83"/>
        <end position="94"/>
    </location>
</feature>
<feature type="strand" evidence="3">
    <location>
        <begin position="98"/>
        <end position="101"/>
    </location>
</feature>
<feature type="helix" evidence="3">
    <location>
        <begin position="113"/>
        <end position="121"/>
    </location>
</feature>
<feature type="strand" evidence="3">
    <location>
        <begin position="125"/>
        <end position="127"/>
    </location>
</feature>
<feature type="strand" evidence="3">
    <location>
        <begin position="136"/>
        <end position="139"/>
    </location>
</feature>
<feature type="strand" evidence="3">
    <location>
        <begin position="145"/>
        <end position="149"/>
    </location>
</feature>
<feature type="helix" evidence="3">
    <location>
        <begin position="155"/>
        <end position="158"/>
    </location>
</feature>
<feature type="helix" evidence="3">
    <location>
        <begin position="159"/>
        <end position="167"/>
    </location>
</feature>
<sequence length="169" mass="19471">MSSSHKSWNSIYEFTVKDINGVDVSLEKYRGHVCLIVNVACKUGATDKNYRQLQEMHTRLVGKGLRILAFPCNQFGGQEPWAEAEIKKFVTEKYGVQFDMFSKIKVNGSDADDLYKFLKSRQHGTLTNNIKWNFSKFLVDRQGQPVKRYSPTTAPYDIEGDIMELLEKK</sequence>
<name>GPX1_SCHMA</name>